<dbReference type="EMBL" id="AC011807">
    <property type="protein sequence ID" value="AAG13047.1"/>
    <property type="status" value="ALT_SEQ"/>
    <property type="molecule type" value="Genomic_DNA"/>
</dbReference>
<dbReference type="EMBL" id="CP002684">
    <property type="protein sequence ID" value="AEE32449.1"/>
    <property type="status" value="ALT_FRAME"/>
    <property type="molecule type" value="Genomic_DNA"/>
</dbReference>
<dbReference type="PIR" id="G96532">
    <property type="entry name" value="G96532"/>
</dbReference>
<dbReference type="RefSeq" id="NP_175384.1">
    <property type="nucleotide sequence ID" value="NM_103849.1"/>
</dbReference>
<dbReference type="FunCoup" id="Q9FX89">
    <property type="interactions" value="378"/>
</dbReference>
<dbReference type="GeneID" id="841385"/>
<dbReference type="KEGG" id="ath:AT1G49610"/>
<dbReference type="Araport" id="AT1G49610"/>
<dbReference type="TAIR" id="AT1G49610"/>
<dbReference type="InParanoid" id="Q9FX89"/>
<dbReference type="OrthoDB" id="1705403at2759"/>
<dbReference type="PRO" id="PR:Q9FX89"/>
<dbReference type="Proteomes" id="UP000006548">
    <property type="component" value="Chromosome 1"/>
</dbReference>
<dbReference type="ExpressionAtlas" id="Q9FX89">
    <property type="expression patterns" value="baseline and differential"/>
</dbReference>
<dbReference type="CDD" id="cd22160">
    <property type="entry name" value="F-box_AtFBL13-like"/>
    <property type="match status" value="1"/>
</dbReference>
<dbReference type="Gene3D" id="3.80.10.10">
    <property type="entry name" value="Ribonuclease Inhibitor"/>
    <property type="match status" value="1"/>
</dbReference>
<dbReference type="InterPro" id="IPR036047">
    <property type="entry name" value="F-box-like_dom_sf"/>
</dbReference>
<dbReference type="InterPro" id="IPR053781">
    <property type="entry name" value="F-box_AtFBL13-like"/>
</dbReference>
<dbReference type="InterPro" id="IPR001810">
    <property type="entry name" value="F-box_dom"/>
</dbReference>
<dbReference type="InterPro" id="IPR044997">
    <property type="entry name" value="F-box_plant"/>
</dbReference>
<dbReference type="InterPro" id="IPR055357">
    <property type="entry name" value="LRR_At1g61320_AtMIF1"/>
</dbReference>
<dbReference type="InterPro" id="IPR032675">
    <property type="entry name" value="LRR_dom_sf"/>
</dbReference>
<dbReference type="PANTHER" id="PTHR32153">
    <property type="entry name" value="OJ000223_09.16 PROTEIN"/>
    <property type="match status" value="1"/>
</dbReference>
<dbReference type="Pfam" id="PF00646">
    <property type="entry name" value="F-box"/>
    <property type="match status" value="1"/>
</dbReference>
<dbReference type="Pfam" id="PF23622">
    <property type="entry name" value="LRR_At1g61320_AtMIF1"/>
    <property type="match status" value="1"/>
</dbReference>
<dbReference type="SUPFAM" id="SSF81383">
    <property type="entry name" value="F-box domain"/>
    <property type="match status" value="1"/>
</dbReference>
<dbReference type="SUPFAM" id="SSF52047">
    <property type="entry name" value="RNI-like"/>
    <property type="match status" value="1"/>
</dbReference>
<gene>
    <name type="ordered locus">At1g49610</name>
    <name type="ORF">F14J22.15</name>
</gene>
<name>FB50_ARATH</name>
<comment type="alternative products">
    <event type="alternative splicing"/>
    <isoform>
        <id>Q9FX89-1</id>
        <name>1</name>
        <sequence type="displayed"/>
    </isoform>
    <isoform>
        <id>Q9FX89-2</id>
        <name>2</name>
        <sequence type="described" ref="VSP_042248"/>
    </isoform>
</comment>
<comment type="sequence caution" evidence="1">
    <conflict type="erroneous gene model prediction">
        <sequence resource="EMBL-CDS" id="AAG13047"/>
    </conflict>
</comment>
<comment type="sequence caution" evidence="1">
    <conflict type="frameshift">
        <sequence resource="EMBL-CDS" id="AAG13047"/>
    </conflict>
</comment>
<comment type="sequence caution" evidence="1">
    <conflict type="frameshift">
        <sequence resource="EMBL-CDS" id="AEE32449"/>
    </conflict>
</comment>
<proteinExistence type="predicted"/>
<accession>Q9FX89</accession>
<accession>F4I3B4</accession>
<evidence type="ECO:0000305" key="1"/>
<protein>
    <recommendedName>
        <fullName>Putative F-box protein At1g49610</fullName>
    </recommendedName>
</protein>
<organism>
    <name type="scientific">Arabidopsis thaliana</name>
    <name type="common">Mouse-ear cress</name>
    <dbReference type="NCBI Taxonomy" id="3702"/>
    <lineage>
        <taxon>Eukaryota</taxon>
        <taxon>Viridiplantae</taxon>
        <taxon>Streptophyta</taxon>
        <taxon>Embryophyta</taxon>
        <taxon>Tracheophyta</taxon>
        <taxon>Spermatophyta</taxon>
        <taxon>Magnoliopsida</taxon>
        <taxon>eudicotyledons</taxon>
        <taxon>Gunneridae</taxon>
        <taxon>Pentapetalae</taxon>
        <taxon>rosids</taxon>
        <taxon>malvids</taxon>
        <taxon>Brassicales</taxon>
        <taxon>Brassicaceae</taxon>
        <taxon>Camelineae</taxon>
        <taxon>Arabidopsis</taxon>
    </lineage>
</organism>
<reference key="1">
    <citation type="journal article" date="2000" name="Nature">
        <title>Sequence and analysis of chromosome 1 of the plant Arabidopsis thaliana.</title>
        <authorList>
            <person name="Theologis A."/>
            <person name="Ecker J.R."/>
            <person name="Palm C.J."/>
            <person name="Federspiel N.A."/>
            <person name="Kaul S."/>
            <person name="White O."/>
            <person name="Alonso J."/>
            <person name="Altafi H."/>
            <person name="Araujo R."/>
            <person name="Bowman C.L."/>
            <person name="Brooks S.Y."/>
            <person name="Buehler E."/>
            <person name="Chan A."/>
            <person name="Chao Q."/>
            <person name="Chen H."/>
            <person name="Cheuk R.F."/>
            <person name="Chin C.W."/>
            <person name="Chung M.K."/>
            <person name="Conn L."/>
            <person name="Conway A.B."/>
            <person name="Conway A.R."/>
            <person name="Creasy T.H."/>
            <person name="Dewar K."/>
            <person name="Dunn P."/>
            <person name="Etgu P."/>
            <person name="Feldblyum T.V."/>
            <person name="Feng J.-D."/>
            <person name="Fong B."/>
            <person name="Fujii C.Y."/>
            <person name="Gill J.E."/>
            <person name="Goldsmith A.D."/>
            <person name="Haas B."/>
            <person name="Hansen N.F."/>
            <person name="Hughes B."/>
            <person name="Huizar L."/>
            <person name="Hunter J.L."/>
            <person name="Jenkins J."/>
            <person name="Johnson-Hopson C."/>
            <person name="Khan S."/>
            <person name="Khaykin E."/>
            <person name="Kim C.J."/>
            <person name="Koo H.L."/>
            <person name="Kremenetskaia I."/>
            <person name="Kurtz D.B."/>
            <person name="Kwan A."/>
            <person name="Lam B."/>
            <person name="Langin-Hooper S."/>
            <person name="Lee A."/>
            <person name="Lee J.M."/>
            <person name="Lenz C.A."/>
            <person name="Li J.H."/>
            <person name="Li Y.-P."/>
            <person name="Lin X."/>
            <person name="Liu S.X."/>
            <person name="Liu Z.A."/>
            <person name="Luros J.S."/>
            <person name="Maiti R."/>
            <person name="Marziali A."/>
            <person name="Militscher J."/>
            <person name="Miranda M."/>
            <person name="Nguyen M."/>
            <person name="Nierman W.C."/>
            <person name="Osborne B.I."/>
            <person name="Pai G."/>
            <person name="Peterson J."/>
            <person name="Pham P.K."/>
            <person name="Rizzo M."/>
            <person name="Rooney T."/>
            <person name="Rowley D."/>
            <person name="Sakano H."/>
            <person name="Salzberg S.L."/>
            <person name="Schwartz J.R."/>
            <person name="Shinn P."/>
            <person name="Southwick A.M."/>
            <person name="Sun H."/>
            <person name="Tallon L.J."/>
            <person name="Tambunga G."/>
            <person name="Toriumi M.J."/>
            <person name="Town C.D."/>
            <person name="Utterback T."/>
            <person name="Van Aken S."/>
            <person name="Vaysberg M."/>
            <person name="Vysotskaia V.S."/>
            <person name="Walker M."/>
            <person name="Wu D."/>
            <person name="Yu G."/>
            <person name="Fraser C.M."/>
            <person name="Venter J.C."/>
            <person name="Davis R.W."/>
        </authorList>
    </citation>
    <scope>NUCLEOTIDE SEQUENCE [LARGE SCALE GENOMIC DNA]</scope>
    <source>
        <strain>cv. Columbia</strain>
    </source>
</reference>
<reference key="2">
    <citation type="journal article" date="2017" name="Plant J.">
        <title>Araport11: a complete reannotation of the Arabidopsis thaliana reference genome.</title>
        <authorList>
            <person name="Cheng C.Y."/>
            <person name="Krishnakumar V."/>
            <person name="Chan A.P."/>
            <person name="Thibaud-Nissen F."/>
            <person name="Schobel S."/>
            <person name="Town C.D."/>
        </authorList>
    </citation>
    <scope>GENOME REANNOTATION</scope>
    <source>
        <strain>cv. Columbia</strain>
    </source>
</reference>
<sequence>MALDGENRDGGSASVRVLKHCLEDVDSISSLPDVILQENLSLIPTKFAIRTSVLSKRWRHVWSETPSLDFDDCYKLDVDFIDKTLALYRARKIMTFDLWITNGINLPYIDGWIKFAMSRNVENLFLSFDFRLYDVPDYLYINSSVKQLVLGTESSELNPRCSVSWSSLTKLSLFSDESIAKILSGCPIIESLTLHFCDQLMVLDLTKSPSLKILEIHGSIWGSGPKHIVAPHIHSLTLKTSQFFIYFCDISSLTEAKVDICFCSLKEIKANFLLDTVLKCLYKLQNVDKLTFGANFLKILSLAEGRGLPFPMFKAKALTLETTISKYVIPGILRVLQNSPELKKLTLHTMDREARTMSFHFEFVESEILTICFYINEILFCSSTG</sequence>
<feature type="chain" id="PRO_0000283324" description="Putative F-box protein At1g49610">
    <location>
        <begin position="1"/>
        <end position="385"/>
    </location>
</feature>
<feature type="domain" description="F-box">
    <location>
        <begin position="25"/>
        <end position="73"/>
    </location>
</feature>
<feature type="splice variant" id="VSP_042248" description="In isoform 2." evidence="1">
    <original>PGILRVLQNSPELKKLTLHTMDREARTMSFHFEFVESEILTICFYINEILFCSSTG</original>
    <variation>PVQGEYDPTYLRCMKLDHCSIFAKISRRNVESKHVASFMELMIKTTKKLEKMVVRLESYLDGRGFEELLEMVPMLSQNNNVSIVLSSTKPRQSL</variation>
    <location>
        <begin position="330"/>
        <end position="385"/>
    </location>
</feature>
<keyword id="KW-0025">Alternative splicing</keyword>
<keyword id="KW-1185">Reference proteome</keyword>